<gene>
    <name type="primary">RHO</name>
</gene>
<accession>P24603</accession>
<keyword id="KW-1003">Cell membrane</keyword>
<keyword id="KW-0966">Cell projection</keyword>
<keyword id="KW-0157">Chromophore</keyword>
<keyword id="KW-1015">Disulfide bond</keyword>
<keyword id="KW-0297">G-protein coupled receptor</keyword>
<keyword id="KW-0325">Glycoprotein</keyword>
<keyword id="KW-0449">Lipoprotein</keyword>
<keyword id="KW-0472">Membrane</keyword>
<keyword id="KW-0564">Palmitate</keyword>
<keyword id="KW-0597">Phosphoprotein</keyword>
<keyword id="KW-0600">Photoreceptor protein</keyword>
<keyword id="KW-0675">Receptor</keyword>
<keyword id="KW-0681">Retinal protein</keyword>
<keyword id="KW-0716">Sensory transduction</keyword>
<keyword id="KW-0807">Transducer</keyword>
<keyword id="KW-0812">Transmembrane</keyword>
<keyword id="KW-1133">Transmembrane helix</keyword>
<keyword id="KW-0844">Vision</keyword>
<feature type="chain" id="PRO_0000197732" description="Rhodopsin">
    <location>
        <begin position="1"/>
        <end position="452"/>
    </location>
</feature>
<feature type="topological domain" description="Extracellular" evidence="7">
    <location>
        <begin position="1"/>
        <end position="33"/>
    </location>
</feature>
<feature type="transmembrane region" description="Helical; Name=1" evidence="3">
    <location>
        <begin position="34"/>
        <end position="58"/>
    </location>
</feature>
<feature type="topological domain" description="Cytoplasmic" evidence="7">
    <location>
        <begin position="59"/>
        <end position="70"/>
    </location>
</feature>
<feature type="transmembrane region" description="Helical; Name=2" evidence="3">
    <location>
        <begin position="71"/>
        <end position="97"/>
    </location>
</feature>
<feature type="topological domain" description="Extracellular" evidence="7">
    <location>
        <begin position="98"/>
        <end position="109"/>
    </location>
</feature>
<feature type="transmembrane region" description="Helical; Name=3" evidence="3">
    <location>
        <begin position="110"/>
        <end position="131"/>
    </location>
</feature>
<feature type="topological domain" description="Cytoplasmic" evidence="7">
    <location>
        <begin position="132"/>
        <end position="151"/>
    </location>
</feature>
<feature type="transmembrane region" description="Helical; Name=4" evidence="3">
    <location>
        <begin position="152"/>
        <end position="172"/>
    </location>
</feature>
<feature type="topological domain" description="Extracellular" evidence="7">
    <location>
        <begin position="173"/>
        <end position="199"/>
    </location>
</feature>
<feature type="transmembrane region" description="Helical; Name=5" evidence="3">
    <location>
        <begin position="200"/>
        <end position="224"/>
    </location>
</feature>
<feature type="topological domain" description="Cytoplasmic" evidence="7">
    <location>
        <begin position="225"/>
        <end position="261"/>
    </location>
</feature>
<feature type="transmembrane region" description="Helical; Name=6" evidence="3">
    <location>
        <begin position="262"/>
        <end position="283"/>
    </location>
</feature>
<feature type="topological domain" description="Extracellular" evidence="7">
    <location>
        <begin position="284"/>
        <end position="293"/>
    </location>
</feature>
<feature type="transmembrane region" description="Helical; Name=7" evidence="3">
    <location>
        <begin position="294"/>
        <end position="315"/>
    </location>
</feature>
<feature type="topological domain" description="Cytoplasmic" evidence="7">
    <location>
        <begin position="316"/>
        <end position="452"/>
    </location>
</feature>
<feature type="region of interest" description="Disordered" evidence="6">
    <location>
        <begin position="346"/>
        <end position="365"/>
    </location>
</feature>
<feature type="region of interest" description="Disordered" evidence="6">
    <location>
        <begin position="376"/>
        <end position="452"/>
    </location>
</feature>
<feature type="short sequence motif" description="'Ionic lock' involved in activated form stabilization" evidence="1">
    <location>
        <begin position="132"/>
        <end position="134"/>
    </location>
</feature>
<feature type="compositionally biased region" description="Low complexity" evidence="6">
    <location>
        <begin position="376"/>
        <end position="388"/>
    </location>
</feature>
<feature type="compositionally biased region" description="Pro residues" evidence="6">
    <location>
        <begin position="389"/>
        <end position="440"/>
    </location>
</feature>
<feature type="modified residue" description="N6-(retinylidene)lysine" evidence="1">
    <location>
        <position position="305"/>
    </location>
</feature>
<feature type="lipid moiety-binding region" description="S-palmitoyl cysteine" evidence="1">
    <location>
        <position position="336"/>
    </location>
</feature>
<feature type="lipid moiety-binding region" description="S-palmitoyl cysteine" evidence="1">
    <location>
        <position position="337"/>
    </location>
</feature>
<feature type="glycosylation site" description="N-linked (GlcNAc...) asparagine" evidence="4">
    <location>
        <position position="8"/>
    </location>
</feature>
<feature type="disulfide bond" evidence="5">
    <location>
        <begin position="108"/>
        <end position="186"/>
    </location>
</feature>
<reference key="1">
    <citation type="journal article" date="1991" name="Biochem. J.">
        <title>Molecular cloning and primary structure of squid (Loligo forbesi) rhodopsin, a phospholipase C-directed G-protein-linked receptor.</title>
        <authorList>
            <person name="Hall M.D."/>
            <person name="Hoon M.A."/>
            <person name="Ryba N.J.P."/>
            <person name="Pottinger J.D.D."/>
            <person name="Keen J.N."/>
            <person name="Saibil H.R."/>
            <person name="Findlay J.B.C."/>
        </authorList>
    </citation>
    <scope>NUCLEOTIDE SEQUENCE [MRNA]</scope>
    <source>
        <tissue>Retina</tissue>
    </source>
</reference>
<proteinExistence type="evidence at transcript level"/>
<name>OPSD_LOLFO</name>
<dbReference type="EMBL" id="X56788">
    <property type="protein sequence ID" value="CAA40108.1"/>
    <property type="molecule type" value="mRNA"/>
</dbReference>
<dbReference type="PIR" id="S14332">
    <property type="entry name" value="S14332"/>
</dbReference>
<dbReference type="SMR" id="P24603"/>
<dbReference type="GlyCosmos" id="P24603">
    <property type="glycosylation" value="1 site, No reported glycans"/>
</dbReference>
<dbReference type="GO" id="GO:0042995">
    <property type="term" value="C:cell projection"/>
    <property type="evidence" value="ECO:0007669"/>
    <property type="project" value="UniProtKB-KW"/>
</dbReference>
<dbReference type="GO" id="GO:0016020">
    <property type="term" value="C:membrane"/>
    <property type="evidence" value="ECO:0000250"/>
    <property type="project" value="UniProtKB"/>
</dbReference>
<dbReference type="GO" id="GO:0005886">
    <property type="term" value="C:plasma membrane"/>
    <property type="evidence" value="ECO:0000250"/>
    <property type="project" value="UniProtKB"/>
</dbReference>
<dbReference type="GO" id="GO:0004930">
    <property type="term" value="F:G protein-coupled receptor activity"/>
    <property type="evidence" value="ECO:0007669"/>
    <property type="project" value="UniProtKB-KW"/>
</dbReference>
<dbReference type="GO" id="GO:0009881">
    <property type="term" value="F:photoreceptor activity"/>
    <property type="evidence" value="ECO:0007669"/>
    <property type="project" value="UniProtKB-KW"/>
</dbReference>
<dbReference type="GO" id="GO:0016918">
    <property type="term" value="F:retinal binding"/>
    <property type="evidence" value="ECO:0000250"/>
    <property type="project" value="UniProtKB"/>
</dbReference>
<dbReference type="GO" id="GO:0007602">
    <property type="term" value="P:phototransduction"/>
    <property type="evidence" value="ECO:0007669"/>
    <property type="project" value="UniProtKB-KW"/>
</dbReference>
<dbReference type="GO" id="GO:0007601">
    <property type="term" value="P:visual perception"/>
    <property type="evidence" value="ECO:0007669"/>
    <property type="project" value="UniProtKB-KW"/>
</dbReference>
<dbReference type="CDD" id="cd15337">
    <property type="entry name" value="7tmA_Opsin_Gq_invertebrates"/>
    <property type="match status" value="1"/>
</dbReference>
<dbReference type="FunFam" id="1.20.1070.10:FF:000044">
    <property type="entry name" value="Opsin, ultraviolet-sensitive"/>
    <property type="match status" value="1"/>
</dbReference>
<dbReference type="Gene3D" id="1.20.1070.10">
    <property type="entry name" value="Rhodopsin 7-helix transmembrane proteins"/>
    <property type="match status" value="1"/>
</dbReference>
<dbReference type="InterPro" id="IPR050125">
    <property type="entry name" value="GPCR_opsins"/>
</dbReference>
<dbReference type="InterPro" id="IPR000276">
    <property type="entry name" value="GPCR_Rhodpsn"/>
</dbReference>
<dbReference type="InterPro" id="IPR017452">
    <property type="entry name" value="GPCR_Rhodpsn_7TM"/>
</dbReference>
<dbReference type="InterPro" id="IPR001760">
    <property type="entry name" value="Opsin"/>
</dbReference>
<dbReference type="InterPro" id="IPR027430">
    <property type="entry name" value="Retinal_BS"/>
</dbReference>
<dbReference type="InterPro" id="IPR006031">
    <property type="entry name" value="XYPPX"/>
</dbReference>
<dbReference type="PANTHER" id="PTHR24240">
    <property type="entry name" value="OPSIN"/>
    <property type="match status" value="1"/>
</dbReference>
<dbReference type="Pfam" id="PF00001">
    <property type="entry name" value="7tm_1"/>
    <property type="match status" value="1"/>
</dbReference>
<dbReference type="Pfam" id="PF02162">
    <property type="entry name" value="XYPPX"/>
    <property type="match status" value="3"/>
</dbReference>
<dbReference type="PRINTS" id="PR00237">
    <property type="entry name" value="GPCRRHODOPSN"/>
</dbReference>
<dbReference type="PRINTS" id="PR00238">
    <property type="entry name" value="OPSIN"/>
</dbReference>
<dbReference type="PRINTS" id="PR00239">
    <property type="entry name" value="RHODOPSNTAIL"/>
</dbReference>
<dbReference type="SMART" id="SM01381">
    <property type="entry name" value="7TM_GPCR_Srsx"/>
    <property type="match status" value="1"/>
</dbReference>
<dbReference type="SUPFAM" id="SSF81321">
    <property type="entry name" value="Family A G protein-coupled receptor-like"/>
    <property type="match status" value="1"/>
</dbReference>
<dbReference type="PROSITE" id="PS00237">
    <property type="entry name" value="G_PROTEIN_RECEP_F1_1"/>
    <property type="match status" value="1"/>
</dbReference>
<dbReference type="PROSITE" id="PS50262">
    <property type="entry name" value="G_PROTEIN_RECEP_F1_2"/>
    <property type="match status" value="1"/>
</dbReference>
<dbReference type="PROSITE" id="PS00238">
    <property type="entry name" value="OPSIN"/>
    <property type="match status" value="1"/>
</dbReference>
<sequence>MGRDIPDNETWWYNPYMDIHPHWKQFDQVPAAVYYSLGIFIAICGIIGCVGNGVVIYLFTKTKSLQTPANMFIINLAFSDFTFSLVNGFPLMTISCFMKYWVFGNAACKVYGLIGGIFGLMSIMTMTMISIDRYNVIGRPMSASKKMSHRKAFIMIIFVWIWSTIWAIGPIFGWGAYTLEGVLCNCSFDYITRDTTTRSNILCMYIFAFMCPIVVIFFCYFNIVMSVSNHEKEMAAMAKRLNAKELRKAQAGANAEMKLAKISIVIVTQFLLSWSPYAVVALLAQFGPIEWVTPYAAQLPVMFAKASAIHNPMIYSVSHPKFRERIASNFPWILTCCQYDEKEIEDDKDAEAEIPAGEQSGGETADAAQMKEMMAMMQKMQAQQQQQPAYPPQGYPPQGYPPPPPQGYPPQGYPPQGYPPQGYPPPPQGPPPQGPPPQAAPPQGVDNQAYQA</sequence>
<protein>
    <recommendedName>
        <fullName>Rhodopsin</fullName>
    </recommendedName>
</protein>
<evidence type="ECO:0000250" key="1">
    <source>
        <dbReference type="UniProtKB" id="P02699"/>
    </source>
</evidence>
<evidence type="ECO:0000250" key="2">
    <source>
        <dbReference type="UniProtKB" id="P08100"/>
    </source>
</evidence>
<evidence type="ECO:0000250" key="3">
    <source>
        <dbReference type="UniProtKB" id="P31356"/>
    </source>
</evidence>
<evidence type="ECO:0000255" key="4"/>
<evidence type="ECO:0000255" key="5">
    <source>
        <dbReference type="PROSITE-ProRule" id="PRU00521"/>
    </source>
</evidence>
<evidence type="ECO:0000256" key="6">
    <source>
        <dbReference type="SAM" id="MobiDB-lite"/>
    </source>
</evidence>
<evidence type="ECO:0000305" key="7"/>
<organism>
    <name type="scientific">Loligo forbesii</name>
    <name type="common">Veined squid</name>
    <dbReference type="NCBI Taxonomy" id="6618"/>
    <lineage>
        <taxon>Eukaryota</taxon>
        <taxon>Metazoa</taxon>
        <taxon>Spiralia</taxon>
        <taxon>Lophotrochozoa</taxon>
        <taxon>Mollusca</taxon>
        <taxon>Cephalopoda</taxon>
        <taxon>Coleoidea</taxon>
        <taxon>Decapodiformes</taxon>
        <taxon>Myopsida</taxon>
        <taxon>Loliginidae</taxon>
        <taxon>Loligo</taxon>
    </lineage>
</organism>
<comment type="function">
    <text evidence="2 3">Photoreceptor required for image-forming vision at low light intensity. Light-induced isomerization of 11-cis to all-trans retinal triggers a conformational change that activates signaling via G-proteins. Signaling mediates the activation of phospholipase C (By similarity). Subsequent receptor phosphorylation mediates displacement of the bound G-protein alpha subunit by arrestin and terminates signaling (By similarity).</text>
</comment>
<comment type="subcellular location">
    <subcellularLocation>
        <location evidence="3">Cell projection</location>
        <location evidence="3">Rhabdomere membrane</location>
        <topology evidence="3">Multi-pass membrane protein</topology>
    </subcellularLocation>
</comment>
<comment type="PTM">
    <text evidence="1 3">Contains one covalently linked retinal chromophore. Upon light absorption, the covalently bound 11-cis-retinal is converted to all-trans-retinal (By similarity). After hydrolysis of the Schiff base and release of the covalently bound all-trans-retinal, active rhodopsin is regenerated by binding of a fresh molecule of 11-cis-retinal (By similarity).</text>
</comment>
<comment type="similarity">
    <text evidence="5">Belongs to the G-protein coupled receptor 1 family. Opsin subfamily.</text>
</comment>